<comment type="catalytic activity">
    <reaction>
        <text>Eliminative cleavage of (1-&gt;4)-alpha-D-galacturonan to give oligosaccharides with 4-deoxy-alpha-D-galact-4-enuronosyl groups at their non-reducing ends.</text>
        <dbReference type="EC" id="4.2.2.2"/>
    </reaction>
</comment>
<comment type="cofactor">
    <cofactor evidence="1">
        <name>Ca(2+)</name>
        <dbReference type="ChEBI" id="CHEBI:29108"/>
    </cofactor>
    <text evidence="1">Binds 1 Ca(2+) ion. Required for its activity.</text>
</comment>
<comment type="pathway">
    <text>Glycan metabolism; pectin degradation; 2-dehydro-3-deoxy-D-gluconate from pectin: step 2/5.</text>
</comment>
<comment type="similarity">
    <text evidence="3">Belongs to the polysaccharide lyase 1 family.</text>
</comment>
<feature type="signal peptide" evidence="2">
    <location>
        <begin position="1"/>
        <end position="24"/>
    </location>
</feature>
<feature type="chain" id="PRO_0000024872" description="Probable pectate lyase 8">
    <location>
        <begin position="25"/>
        <end position="416"/>
    </location>
</feature>
<feature type="active site" evidence="2">
    <location>
        <position position="294"/>
    </location>
</feature>
<feature type="binding site" evidence="1">
    <location>
        <position position="214"/>
    </location>
    <ligand>
        <name>Ca(2+)</name>
        <dbReference type="ChEBI" id="CHEBI:29108"/>
    </ligand>
</feature>
<feature type="binding site" evidence="1">
    <location>
        <position position="238"/>
    </location>
    <ligand>
        <name>Ca(2+)</name>
        <dbReference type="ChEBI" id="CHEBI:29108"/>
    </ligand>
</feature>
<feature type="binding site" evidence="1">
    <location>
        <position position="242"/>
    </location>
    <ligand>
        <name>Ca(2+)</name>
        <dbReference type="ChEBI" id="CHEBI:29108"/>
    </ligand>
</feature>
<feature type="glycosylation site" description="N-linked (GlcNAc...) asparagine" evidence="2">
    <location>
        <position position="23"/>
    </location>
</feature>
<feature type="glycosylation site" description="N-linked (GlcNAc...) asparagine" evidence="2">
    <location>
        <position position="28"/>
    </location>
</feature>
<feature type="glycosylation site" description="N-linked (GlcNAc...) asparagine" evidence="2">
    <location>
        <position position="52"/>
    </location>
</feature>
<feature type="sequence conflict" description="In Ref. 3; AAM61584." evidence="3" ref="3">
    <original>A</original>
    <variation>T</variation>
    <location>
        <position position="17"/>
    </location>
</feature>
<feature type="sequence conflict" description="In Ref. 3; AAM61584." evidence="3" ref="3">
    <original>G</original>
    <variation>C</variation>
    <location>
        <position position="95"/>
    </location>
</feature>
<feature type="sequence conflict" description="In Ref. 3; AAM61584." evidence="3" ref="3">
    <original>A</original>
    <variation>S</variation>
    <location>
        <position position="382"/>
    </location>
</feature>
<keyword id="KW-0106">Calcium</keyword>
<keyword id="KW-0325">Glycoprotein</keyword>
<keyword id="KW-0456">Lyase</keyword>
<keyword id="KW-0479">Metal-binding</keyword>
<keyword id="KW-1185">Reference proteome</keyword>
<keyword id="KW-0732">Signal</keyword>
<evidence type="ECO:0000250" key="1"/>
<evidence type="ECO:0000255" key="2"/>
<evidence type="ECO:0000305" key="3"/>
<accession>Q9M8Z8</accession>
<accession>Q8LF66</accession>
<dbReference type="EC" id="4.2.2.2"/>
<dbReference type="EMBL" id="AC016827">
    <property type="protein sequence ID" value="AAF27005.1"/>
    <property type="molecule type" value="Genomic_DNA"/>
</dbReference>
<dbReference type="EMBL" id="CP002686">
    <property type="protein sequence ID" value="AEE74488.1"/>
    <property type="molecule type" value="Genomic_DNA"/>
</dbReference>
<dbReference type="EMBL" id="AY085026">
    <property type="protein sequence ID" value="AAM61584.1"/>
    <property type="molecule type" value="mRNA"/>
</dbReference>
<dbReference type="RefSeq" id="NP_187357.1">
    <property type="nucleotide sequence ID" value="NM_111581.3"/>
</dbReference>
<dbReference type="SMR" id="Q9M8Z8"/>
<dbReference type="BioGRID" id="5221">
    <property type="interactions" value="1"/>
</dbReference>
<dbReference type="FunCoup" id="Q9M8Z8">
    <property type="interactions" value="124"/>
</dbReference>
<dbReference type="STRING" id="3702.Q9M8Z8"/>
<dbReference type="CAZy" id="PL1">
    <property type="family name" value="Polysaccharide Lyase Family 1"/>
</dbReference>
<dbReference type="GlyGen" id="Q9M8Z8">
    <property type="glycosylation" value="3 sites"/>
</dbReference>
<dbReference type="iPTMnet" id="Q9M8Z8"/>
<dbReference type="PaxDb" id="3702-AT3G07010.1"/>
<dbReference type="ProteomicsDB" id="234976"/>
<dbReference type="EnsemblPlants" id="AT3G07010.1">
    <property type="protein sequence ID" value="AT3G07010.1"/>
    <property type="gene ID" value="AT3G07010"/>
</dbReference>
<dbReference type="GeneID" id="819886"/>
<dbReference type="Gramene" id="AT3G07010.1">
    <property type="protein sequence ID" value="AT3G07010.1"/>
    <property type="gene ID" value="AT3G07010"/>
</dbReference>
<dbReference type="KEGG" id="ath:AT3G07010"/>
<dbReference type="Araport" id="AT3G07010"/>
<dbReference type="TAIR" id="AT3G07010"/>
<dbReference type="eggNOG" id="ENOG502QQ5F">
    <property type="taxonomic scope" value="Eukaryota"/>
</dbReference>
<dbReference type="HOGENOM" id="CLU_026608_0_1_1"/>
<dbReference type="InParanoid" id="Q9M8Z8"/>
<dbReference type="PhylomeDB" id="Q9M8Z8"/>
<dbReference type="BioCyc" id="ARA:AT3G07010-MONOMER"/>
<dbReference type="UniPathway" id="UPA00545">
    <property type="reaction ID" value="UER00824"/>
</dbReference>
<dbReference type="PRO" id="PR:Q9M8Z8"/>
<dbReference type="Proteomes" id="UP000006548">
    <property type="component" value="Chromosome 3"/>
</dbReference>
<dbReference type="ExpressionAtlas" id="Q9M8Z8">
    <property type="expression patterns" value="baseline and differential"/>
</dbReference>
<dbReference type="GO" id="GO:0046872">
    <property type="term" value="F:metal ion binding"/>
    <property type="evidence" value="ECO:0007669"/>
    <property type="project" value="UniProtKB-KW"/>
</dbReference>
<dbReference type="GO" id="GO:0030570">
    <property type="term" value="F:pectate lyase activity"/>
    <property type="evidence" value="ECO:0007669"/>
    <property type="project" value="UniProtKB-EC"/>
</dbReference>
<dbReference type="GO" id="GO:0045490">
    <property type="term" value="P:pectin catabolic process"/>
    <property type="evidence" value="ECO:0007669"/>
    <property type="project" value="UniProtKB-UniPathway"/>
</dbReference>
<dbReference type="FunFam" id="2.160.20.10:FF:000009">
    <property type="entry name" value="Pectate lyase"/>
    <property type="match status" value="1"/>
</dbReference>
<dbReference type="Gene3D" id="2.160.20.10">
    <property type="entry name" value="Single-stranded right-handed beta-helix, Pectin lyase-like"/>
    <property type="match status" value="1"/>
</dbReference>
<dbReference type="InterPro" id="IPR018082">
    <property type="entry name" value="AmbAllergen"/>
</dbReference>
<dbReference type="InterPro" id="IPR002022">
    <property type="entry name" value="Pec_lyase"/>
</dbReference>
<dbReference type="InterPro" id="IPR012334">
    <property type="entry name" value="Pectin_lyas_fold"/>
</dbReference>
<dbReference type="InterPro" id="IPR011050">
    <property type="entry name" value="Pectin_lyase_fold/virulence"/>
</dbReference>
<dbReference type="InterPro" id="IPR045032">
    <property type="entry name" value="PEL"/>
</dbReference>
<dbReference type="PANTHER" id="PTHR31683">
    <property type="entry name" value="PECTATE LYASE 18-RELATED"/>
    <property type="match status" value="1"/>
</dbReference>
<dbReference type="PANTHER" id="PTHR31683:SF189">
    <property type="entry name" value="PECTATE LYASE 8-RELATED"/>
    <property type="match status" value="1"/>
</dbReference>
<dbReference type="Pfam" id="PF00544">
    <property type="entry name" value="Pectate_lyase_4"/>
    <property type="match status" value="1"/>
</dbReference>
<dbReference type="PRINTS" id="PR00807">
    <property type="entry name" value="AMBALLERGEN"/>
</dbReference>
<dbReference type="SMART" id="SM00656">
    <property type="entry name" value="Amb_all"/>
    <property type="match status" value="1"/>
</dbReference>
<dbReference type="SUPFAM" id="SSF51126">
    <property type="entry name" value="Pectin lyase-like"/>
    <property type="match status" value="1"/>
</dbReference>
<name>PLY8_ARATH</name>
<reference key="1">
    <citation type="journal article" date="2000" name="Nature">
        <title>Sequence and analysis of chromosome 3 of the plant Arabidopsis thaliana.</title>
        <authorList>
            <person name="Salanoubat M."/>
            <person name="Lemcke K."/>
            <person name="Rieger M."/>
            <person name="Ansorge W."/>
            <person name="Unseld M."/>
            <person name="Fartmann B."/>
            <person name="Valle G."/>
            <person name="Bloecker H."/>
            <person name="Perez-Alonso M."/>
            <person name="Obermaier B."/>
            <person name="Delseny M."/>
            <person name="Boutry M."/>
            <person name="Grivell L.A."/>
            <person name="Mache R."/>
            <person name="Puigdomenech P."/>
            <person name="De Simone V."/>
            <person name="Choisne N."/>
            <person name="Artiguenave F."/>
            <person name="Robert C."/>
            <person name="Brottier P."/>
            <person name="Wincker P."/>
            <person name="Cattolico L."/>
            <person name="Weissenbach J."/>
            <person name="Saurin W."/>
            <person name="Quetier F."/>
            <person name="Schaefer M."/>
            <person name="Mueller-Auer S."/>
            <person name="Gabel C."/>
            <person name="Fuchs M."/>
            <person name="Benes V."/>
            <person name="Wurmbach E."/>
            <person name="Drzonek H."/>
            <person name="Erfle H."/>
            <person name="Jordan N."/>
            <person name="Bangert S."/>
            <person name="Wiedelmann R."/>
            <person name="Kranz H."/>
            <person name="Voss H."/>
            <person name="Holland R."/>
            <person name="Brandt P."/>
            <person name="Nyakatura G."/>
            <person name="Vezzi A."/>
            <person name="D'Angelo M."/>
            <person name="Pallavicini A."/>
            <person name="Toppo S."/>
            <person name="Simionati B."/>
            <person name="Conrad A."/>
            <person name="Hornischer K."/>
            <person name="Kauer G."/>
            <person name="Loehnert T.-H."/>
            <person name="Nordsiek G."/>
            <person name="Reichelt J."/>
            <person name="Scharfe M."/>
            <person name="Schoen O."/>
            <person name="Bargues M."/>
            <person name="Terol J."/>
            <person name="Climent J."/>
            <person name="Navarro P."/>
            <person name="Collado C."/>
            <person name="Perez-Perez A."/>
            <person name="Ottenwaelder B."/>
            <person name="Duchemin D."/>
            <person name="Cooke R."/>
            <person name="Laudie M."/>
            <person name="Berger-Llauro C."/>
            <person name="Purnelle B."/>
            <person name="Masuy D."/>
            <person name="de Haan M."/>
            <person name="Maarse A.C."/>
            <person name="Alcaraz J.-P."/>
            <person name="Cottet A."/>
            <person name="Casacuberta E."/>
            <person name="Monfort A."/>
            <person name="Argiriou A."/>
            <person name="Flores M."/>
            <person name="Liguori R."/>
            <person name="Vitale D."/>
            <person name="Mannhaupt G."/>
            <person name="Haase D."/>
            <person name="Schoof H."/>
            <person name="Rudd S."/>
            <person name="Zaccaria P."/>
            <person name="Mewes H.-W."/>
            <person name="Mayer K.F.X."/>
            <person name="Kaul S."/>
            <person name="Town C.D."/>
            <person name="Koo H.L."/>
            <person name="Tallon L.J."/>
            <person name="Jenkins J."/>
            <person name="Rooney T."/>
            <person name="Rizzo M."/>
            <person name="Walts A."/>
            <person name="Utterback T."/>
            <person name="Fujii C.Y."/>
            <person name="Shea T.P."/>
            <person name="Creasy T.H."/>
            <person name="Haas B."/>
            <person name="Maiti R."/>
            <person name="Wu D."/>
            <person name="Peterson J."/>
            <person name="Van Aken S."/>
            <person name="Pai G."/>
            <person name="Militscher J."/>
            <person name="Sellers P."/>
            <person name="Gill J.E."/>
            <person name="Feldblyum T.V."/>
            <person name="Preuss D."/>
            <person name="Lin X."/>
            <person name="Nierman W.C."/>
            <person name="Salzberg S.L."/>
            <person name="White O."/>
            <person name="Venter J.C."/>
            <person name="Fraser C.M."/>
            <person name="Kaneko T."/>
            <person name="Nakamura Y."/>
            <person name="Sato S."/>
            <person name="Kato T."/>
            <person name="Asamizu E."/>
            <person name="Sasamoto S."/>
            <person name="Kimura T."/>
            <person name="Idesawa K."/>
            <person name="Kawashima K."/>
            <person name="Kishida Y."/>
            <person name="Kiyokawa C."/>
            <person name="Kohara M."/>
            <person name="Matsumoto M."/>
            <person name="Matsuno A."/>
            <person name="Muraki A."/>
            <person name="Nakayama S."/>
            <person name="Nakazaki N."/>
            <person name="Shinpo S."/>
            <person name="Takeuchi C."/>
            <person name="Wada T."/>
            <person name="Watanabe A."/>
            <person name="Yamada M."/>
            <person name="Yasuda M."/>
            <person name="Tabata S."/>
        </authorList>
    </citation>
    <scope>NUCLEOTIDE SEQUENCE [LARGE SCALE GENOMIC DNA]</scope>
    <source>
        <strain>cv. Columbia</strain>
    </source>
</reference>
<reference key="2">
    <citation type="journal article" date="2017" name="Plant J.">
        <title>Araport11: a complete reannotation of the Arabidopsis thaliana reference genome.</title>
        <authorList>
            <person name="Cheng C.Y."/>
            <person name="Krishnakumar V."/>
            <person name="Chan A.P."/>
            <person name="Thibaud-Nissen F."/>
            <person name="Schobel S."/>
            <person name="Town C.D."/>
        </authorList>
    </citation>
    <scope>GENOME REANNOTATION</scope>
    <source>
        <strain>cv. Columbia</strain>
    </source>
</reference>
<reference key="3">
    <citation type="submission" date="2002-03" db="EMBL/GenBank/DDBJ databases">
        <title>Full-length cDNA from Arabidopsis thaliana.</title>
        <authorList>
            <person name="Brover V.V."/>
            <person name="Troukhan M.E."/>
            <person name="Alexandrov N.A."/>
            <person name="Lu Y.-P."/>
            <person name="Flavell R.B."/>
            <person name="Feldmann K.A."/>
        </authorList>
    </citation>
    <scope>NUCLEOTIDE SEQUENCE [LARGE SCALE MRNA]</scope>
</reference>
<sequence length="416" mass="46174">MAVTKLILFASALLLTALFIGVNASRSNETWHEHAVENPDEVAAMVDMSIRNSTERRRLGYFSCATGNPIDDCWRCDRKWQLRRKRLADCSIGFGRNAIGGRDGRFYVVTDPGDDDPVNPIPGTLRHAVIQDEPLWIIFKRDMVITLKQELIMNSFKTIDGRGVNVHIANGACLTIQYVTNIIVHGIHVHDCKPTGNAMVRSSPSHYGFRSMADGDAISIFGSSHIWIDHNSLSNCADGLVDAVMSSTAITVSNNFFTHHNEVMLLGHSDSYTRDKVMQVTIAYNHFGEGLIQRMPRCRHGYFHVVNNDYTHWEMYAIGGSAGPTINSQGNRFLAPVNPFAKEVTKREYTGESKWKHWNWRSEGDLFLNGAFFTRSGAGAGANYARASSLSAKSSSLVGTMTSYSGALNCRAGRRC</sequence>
<gene>
    <name type="ordered locus">At3g07010</name>
    <name type="ORF">F17A9.16</name>
</gene>
<protein>
    <recommendedName>
        <fullName>Probable pectate lyase 8</fullName>
        <ecNumber>4.2.2.2</ecNumber>
    </recommendedName>
</protein>
<proteinExistence type="evidence at transcript level"/>
<organism>
    <name type="scientific">Arabidopsis thaliana</name>
    <name type="common">Mouse-ear cress</name>
    <dbReference type="NCBI Taxonomy" id="3702"/>
    <lineage>
        <taxon>Eukaryota</taxon>
        <taxon>Viridiplantae</taxon>
        <taxon>Streptophyta</taxon>
        <taxon>Embryophyta</taxon>
        <taxon>Tracheophyta</taxon>
        <taxon>Spermatophyta</taxon>
        <taxon>Magnoliopsida</taxon>
        <taxon>eudicotyledons</taxon>
        <taxon>Gunneridae</taxon>
        <taxon>Pentapetalae</taxon>
        <taxon>rosids</taxon>
        <taxon>malvids</taxon>
        <taxon>Brassicales</taxon>
        <taxon>Brassicaceae</taxon>
        <taxon>Camelineae</taxon>
        <taxon>Arabidopsis</taxon>
    </lineage>
</organism>